<comment type="function">
    <text evidence="1">Catalyzes the conversion of dihydroorotate to orotate with quinone as electron acceptor.</text>
</comment>
<comment type="catalytic activity">
    <reaction evidence="1">
        <text>(S)-dihydroorotate + a quinone = orotate + a quinol</text>
        <dbReference type="Rhea" id="RHEA:30187"/>
        <dbReference type="ChEBI" id="CHEBI:24646"/>
        <dbReference type="ChEBI" id="CHEBI:30839"/>
        <dbReference type="ChEBI" id="CHEBI:30864"/>
        <dbReference type="ChEBI" id="CHEBI:132124"/>
        <dbReference type="EC" id="1.3.5.2"/>
    </reaction>
</comment>
<comment type="cofactor">
    <cofactor evidence="1">
        <name>FMN</name>
        <dbReference type="ChEBI" id="CHEBI:58210"/>
    </cofactor>
    <text evidence="1">Binds 1 FMN per subunit.</text>
</comment>
<comment type="pathway">
    <text evidence="1">Pyrimidine metabolism; UMP biosynthesis via de novo pathway; orotate from (S)-dihydroorotate (quinone route): step 1/1.</text>
</comment>
<comment type="subunit">
    <text evidence="1">Monomer.</text>
</comment>
<comment type="subcellular location">
    <subcellularLocation>
        <location evidence="1">Cell membrane</location>
        <topology evidence="1">Peripheral membrane protein</topology>
    </subcellularLocation>
</comment>
<comment type="similarity">
    <text evidence="1">Belongs to the dihydroorotate dehydrogenase family. Type 2 subfamily.</text>
</comment>
<evidence type="ECO:0000255" key="1">
    <source>
        <dbReference type="HAMAP-Rule" id="MF_00225"/>
    </source>
</evidence>
<name>PYRD_XYLFT</name>
<gene>
    <name evidence="1" type="primary">pyrD</name>
    <name type="ordered locus">PD_1952</name>
</gene>
<protein>
    <recommendedName>
        <fullName evidence="1">Dihydroorotate dehydrogenase (quinone)</fullName>
        <ecNumber evidence="1">1.3.5.2</ecNumber>
    </recommendedName>
    <alternativeName>
        <fullName evidence="1">DHOdehase</fullName>
        <shortName evidence="1">DHOD</shortName>
        <shortName evidence="1">DHODase</shortName>
    </alternativeName>
    <alternativeName>
        <fullName evidence="1">Dihydroorotate oxidase</fullName>
    </alternativeName>
</protein>
<accession>Q87A77</accession>
<reference key="1">
    <citation type="journal article" date="2003" name="J. Bacteriol.">
        <title>Comparative analyses of the complete genome sequences of Pierce's disease and citrus variegated chlorosis strains of Xylella fastidiosa.</title>
        <authorList>
            <person name="Van Sluys M.A."/>
            <person name="de Oliveira M.C."/>
            <person name="Monteiro-Vitorello C.B."/>
            <person name="Miyaki C.Y."/>
            <person name="Furlan L.R."/>
            <person name="Camargo L.E.A."/>
            <person name="da Silva A.C.R."/>
            <person name="Moon D.H."/>
            <person name="Takita M.A."/>
            <person name="Lemos E.G.M."/>
            <person name="Machado M.A."/>
            <person name="Ferro M.I.T."/>
            <person name="da Silva F.R."/>
            <person name="Goldman M.H.S."/>
            <person name="Goldman G.H."/>
            <person name="Lemos M.V.F."/>
            <person name="El-Dorry H."/>
            <person name="Tsai S.M."/>
            <person name="Carrer H."/>
            <person name="Carraro D.M."/>
            <person name="de Oliveira R.C."/>
            <person name="Nunes L.R."/>
            <person name="Siqueira W.J."/>
            <person name="Coutinho L.L."/>
            <person name="Kimura E.T."/>
            <person name="Ferro E.S."/>
            <person name="Harakava R."/>
            <person name="Kuramae E.E."/>
            <person name="Marino C.L."/>
            <person name="Giglioti E."/>
            <person name="Abreu I.L."/>
            <person name="Alves L.M.C."/>
            <person name="do Amaral A.M."/>
            <person name="Baia G.S."/>
            <person name="Blanco S.R."/>
            <person name="Brito M.S."/>
            <person name="Cannavan F.S."/>
            <person name="Celestino A.V."/>
            <person name="da Cunha A.F."/>
            <person name="Fenille R.C."/>
            <person name="Ferro J.A."/>
            <person name="Formighieri E.F."/>
            <person name="Kishi L.T."/>
            <person name="Leoni S.G."/>
            <person name="Oliveira A.R."/>
            <person name="Rosa V.E. Jr."/>
            <person name="Sassaki F.T."/>
            <person name="Sena J.A.D."/>
            <person name="de Souza A.A."/>
            <person name="Truffi D."/>
            <person name="Tsukumo F."/>
            <person name="Yanai G.M."/>
            <person name="Zaros L.G."/>
            <person name="Civerolo E.L."/>
            <person name="Simpson A.J.G."/>
            <person name="Almeida N.F. Jr."/>
            <person name="Setubal J.C."/>
            <person name="Kitajima J.P."/>
        </authorList>
    </citation>
    <scope>NUCLEOTIDE SEQUENCE [LARGE SCALE GENOMIC DNA]</scope>
    <source>
        <strain>Temecula1 / ATCC 700964</strain>
    </source>
</reference>
<sequence length="351" mass="37877">MYSLFRPLLFTCDAERAHDISLRTLDIAYHSGALPLLTRHTRPLPTTAFGLNFPNPVGLAAGLDKNGTHIDALFALGFGFIEIGTTTPRPQAGNPKPRLFRLTQQQAVINRMGFNNLGVDALVRNVAGARRRNGPLGINIGKNKDTPNEQASNDYRYCLERVYALADYVTINLSSPNTAGLRALQEEQTLRRLIGELRETQETLAAKHGRHVPMLIKMAPDLSDSDIDAAARVLNEMSVDGVIATNTTVTRPLLRQHPLASEAGGLSGAPLLGQSTLVLRRLRTHLPETIDLIGVGGICCGADAGAKMAAGASLVQCYTGLIFKGPQLVGECVEAIRRRLEASSSGRENTQ</sequence>
<keyword id="KW-1003">Cell membrane</keyword>
<keyword id="KW-0285">Flavoprotein</keyword>
<keyword id="KW-0288">FMN</keyword>
<keyword id="KW-0472">Membrane</keyword>
<keyword id="KW-0560">Oxidoreductase</keyword>
<keyword id="KW-0665">Pyrimidine biosynthesis</keyword>
<keyword id="KW-1185">Reference proteome</keyword>
<organism>
    <name type="scientific">Xylella fastidiosa (strain Temecula1 / ATCC 700964)</name>
    <dbReference type="NCBI Taxonomy" id="183190"/>
    <lineage>
        <taxon>Bacteria</taxon>
        <taxon>Pseudomonadati</taxon>
        <taxon>Pseudomonadota</taxon>
        <taxon>Gammaproteobacteria</taxon>
        <taxon>Lysobacterales</taxon>
        <taxon>Lysobacteraceae</taxon>
        <taxon>Xylella</taxon>
    </lineage>
</organism>
<proteinExistence type="inferred from homology"/>
<dbReference type="EC" id="1.3.5.2" evidence="1"/>
<dbReference type="EMBL" id="AE009442">
    <property type="protein sequence ID" value="AAO29782.1"/>
    <property type="molecule type" value="Genomic_DNA"/>
</dbReference>
<dbReference type="RefSeq" id="WP_004090333.1">
    <property type="nucleotide sequence ID" value="NC_004556.1"/>
</dbReference>
<dbReference type="SMR" id="Q87A77"/>
<dbReference type="KEGG" id="xft:PD_1952"/>
<dbReference type="HOGENOM" id="CLU_013640_2_0_6"/>
<dbReference type="UniPathway" id="UPA00070">
    <property type="reaction ID" value="UER00946"/>
</dbReference>
<dbReference type="Proteomes" id="UP000002516">
    <property type="component" value="Chromosome"/>
</dbReference>
<dbReference type="GO" id="GO:0005737">
    <property type="term" value="C:cytoplasm"/>
    <property type="evidence" value="ECO:0007669"/>
    <property type="project" value="InterPro"/>
</dbReference>
<dbReference type="GO" id="GO:0005886">
    <property type="term" value="C:plasma membrane"/>
    <property type="evidence" value="ECO:0007669"/>
    <property type="project" value="UniProtKB-SubCell"/>
</dbReference>
<dbReference type="GO" id="GO:0106430">
    <property type="term" value="F:dihydroorotate dehydrogenase (quinone) activity"/>
    <property type="evidence" value="ECO:0007669"/>
    <property type="project" value="UniProtKB-EC"/>
</dbReference>
<dbReference type="GO" id="GO:0006207">
    <property type="term" value="P:'de novo' pyrimidine nucleobase biosynthetic process"/>
    <property type="evidence" value="ECO:0007669"/>
    <property type="project" value="InterPro"/>
</dbReference>
<dbReference type="GO" id="GO:0044205">
    <property type="term" value="P:'de novo' UMP biosynthetic process"/>
    <property type="evidence" value="ECO:0007669"/>
    <property type="project" value="UniProtKB-UniRule"/>
</dbReference>
<dbReference type="CDD" id="cd04738">
    <property type="entry name" value="DHOD_2_like"/>
    <property type="match status" value="1"/>
</dbReference>
<dbReference type="Gene3D" id="3.20.20.70">
    <property type="entry name" value="Aldolase class I"/>
    <property type="match status" value="1"/>
</dbReference>
<dbReference type="HAMAP" id="MF_00225">
    <property type="entry name" value="DHO_dh_type2"/>
    <property type="match status" value="1"/>
</dbReference>
<dbReference type="InterPro" id="IPR013785">
    <property type="entry name" value="Aldolase_TIM"/>
</dbReference>
<dbReference type="InterPro" id="IPR050074">
    <property type="entry name" value="DHO_dehydrogenase"/>
</dbReference>
<dbReference type="InterPro" id="IPR012135">
    <property type="entry name" value="Dihydroorotate_DH_1_2"/>
</dbReference>
<dbReference type="InterPro" id="IPR005719">
    <property type="entry name" value="Dihydroorotate_DH_2"/>
</dbReference>
<dbReference type="InterPro" id="IPR005720">
    <property type="entry name" value="Dihydroorotate_DH_cat"/>
</dbReference>
<dbReference type="InterPro" id="IPR001295">
    <property type="entry name" value="Dihydroorotate_DH_CS"/>
</dbReference>
<dbReference type="NCBIfam" id="NF003645">
    <property type="entry name" value="PRK05286.1-2"/>
    <property type="match status" value="1"/>
</dbReference>
<dbReference type="NCBIfam" id="NF003646">
    <property type="entry name" value="PRK05286.1-4"/>
    <property type="match status" value="1"/>
</dbReference>
<dbReference type="NCBIfam" id="NF003652">
    <property type="entry name" value="PRK05286.2-5"/>
    <property type="match status" value="1"/>
</dbReference>
<dbReference type="NCBIfam" id="TIGR01036">
    <property type="entry name" value="pyrD_sub2"/>
    <property type="match status" value="1"/>
</dbReference>
<dbReference type="PANTHER" id="PTHR48109:SF4">
    <property type="entry name" value="DIHYDROOROTATE DEHYDROGENASE (QUINONE), MITOCHONDRIAL"/>
    <property type="match status" value="1"/>
</dbReference>
<dbReference type="PANTHER" id="PTHR48109">
    <property type="entry name" value="DIHYDROOROTATE DEHYDROGENASE (QUINONE), MITOCHONDRIAL-RELATED"/>
    <property type="match status" value="1"/>
</dbReference>
<dbReference type="Pfam" id="PF01180">
    <property type="entry name" value="DHO_dh"/>
    <property type="match status" value="1"/>
</dbReference>
<dbReference type="PIRSF" id="PIRSF000164">
    <property type="entry name" value="DHO_oxidase"/>
    <property type="match status" value="1"/>
</dbReference>
<dbReference type="SUPFAM" id="SSF51395">
    <property type="entry name" value="FMN-linked oxidoreductases"/>
    <property type="match status" value="1"/>
</dbReference>
<dbReference type="PROSITE" id="PS00911">
    <property type="entry name" value="DHODEHASE_1"/>
    <property type="match status" value="1"/>
</dbReference>
<feature type="chain" id="PRO_0000148493" description="Dihydroorotate dehydrogenase (quinone)">
    <location>
        <begin position="1"/>
        <end position="351"/>
    </location>
</feature>
<feature type="active site" description="Nucleophile" evidence="1">
    <location>
        <position position="175"/>
    </location>
</feature>
<feature type="binding site" evidence="1">
    <location>
        <begin position="61"/>
        <end position="65"/>
    </location>
    <ligand>
        <name>FMN</name>
        <dbReference type="ChEBI" id="CHEBI:58210"/>
    </ligand>
</feature>
<feature type="binding site" evidence="1">
    <location>
        <position position="65"/>
    </location>
    <ligand>
        <name>substrate</name>
    </ligand>
</feature>
<feature type="binding site" evidence="1">
    <location>
        <position position="85"/>
    </location>
    <ligand>
        <name>FMN</name>
        <dbReference type="ChEBI" id="CHEBI:58210"/>
    </ligand>
</feature>
<feature type="binding site" evidence="1">
    <location>
        <begin position="110"/>
        <end position="114"/>
    </location>
    <ligand>
        <name>substrate</name>
    </ligand>
</feature>
<feature type="binding site" evidence="1">
    <location>
        <position position="139"/>
    </location>
    <ligand>
        <name>FMN</name>
        <dbReference type="ChEBI" id="CHEBI:58210"/>
    </ligand>
</feature>
<feature type="binding site" evidence="1">
    <location>
        <position position="172"/>
    </location>
    <ligand>
        <name>FMN</name>
        <dbReference type="ChEBI" id="CHEBI:58210"/>
    </ligand>
</feature>
<feature type="binding site" evidence="1">
    <location>
        <position position="172"/>
    </location>
    <ligand>
        <name>substrate</name>
    </ligand>
</feature>
<feature type="binding site" evidence="1">
    <location>
        <position position="177"/>
    </location>
    <ligand>
        <name>substrate</name>
    </ligand>
</feature>
<feature type="binding site" evidence="1">
    <location>
        <position position="217"/>
    </location>
    <ligand>
        <name>FMN</name>
        <dbReference type="ChEBI" id="CHEBI:58210"/>
    </ligand>
</feature>
<feature type="binding site" evidence="1">
    <location>
        <position position="245"/>
    </location>
    <ligand>
        <name>FMN</name>
        <dbReference type="ChEBI" id="CHEBI:58210"/>
    </ligand>
</feature>
<feature type="binding site" evidence="1">
    <location>
        <begin position="246"/>
        <end position="247"/>
    </location>
    <ligand>
        <name>substrate</name>
    </ligand>
</feature>
<feature type="binding site" evidence="1">
    <location>
        <position position="268"/>
    </location>
    <ligand>
        <name>FMN</name>
        <dbReference type="ChEBI" id="CHEBI:58210"/>
    </ligand>
</feature>
<feature type="binding site" evidence="1">
    <location>
        <position position="297"/>
    </location>
    <ligand>
        <name>FMN</name>
        <dbReference type="ChEBI" id="CHEBI:58210"/>
    </ligand>
</feature>
<feature type="binding site" evidence="1">
    <location>
        <begin position="318"/>
        <end position="319"/>
    </location>
    <ligand>
        <name>FMN</name>
        <dbReference type="ChEBI" id="CHEBI:58210"/>
    </ligand>
</feature>